<proteinExistence type="predicted"/>
<accession>Q57239</accession>
<accession>Q52774</accession>
<dbReference type="EMBL" id="M62426">
    <property type="protein sequence ID" value="AAA26401.1"/>
    <property type="molecule type" value="Genomic_DNA"/>
</dbReference>
<dbReference type="EMBL" id="M62846">
    <property type="protein sequence ID" value="AAA98153.1"/>
    <property type="molecule type" value="Genomic_DNA"/>
</dbReference>
<dbReference type="EMBL" id="L18919">
    <property type="protein sequence ID" value="AAA92773.1"/>
    <property type="molecule type" value="Genomic_DNA"/>
</dbReference>
<dbReference type="RefSeq" id="WP_011205833.1">
    <property type="nucleotide sequence ID" value="NZ_VMTS01000048.1"/>
</dbReference>
<dbReference type="SMR" id="Q57239"/>
<dbReference type="GO" id="GO:0046690">
    <property type="term" value="P:response to tellurium ion"/>
    <property type="evidence" value="ECO:0007669"/>
    <property type="project" value="UniProtKB-KW"/>
</dbReference>
<dbReference type="InterPro" id="IPR008863">
    <property type="entry name" value="Toxic_anion-R_TelA"/>
</dbReference>
<dbReference type="Pfam" id="PF05816">
    <property type="entry name" value="TelA"/>
    <property type="match status" value="1"/>
</dbReference>
<protein>
    <recommendedName>
        <fullName>Protein KlaA</fullName>
    </recommendedName>
    <alternativeName>
        <fullName>Protein KilA</fullName>
    </alternativeName>
</protein>
<reference key="1">
    <citation type="journal article" date="1991" name="J. Bacteriol.">
        <title>Structural, molecular, and genetic analysis of the kilA operon of broad-host-range plasmid RK2.</title>
        <authorList>
            <person name="Goncharoff P."/>
            <person name="Saadi S."/>
            <person name="Chang C.H."/>
            <person name="Saltman L.H."/>
            <person name="Figurski D.H."/>
        </authorList>
    </citation>
    <scope>NUCLEOTIDE SEQUENCE [GENOMIC DNA]</scope>
</reference>
<reference key="2">
    <citation type="journal article" date="1991" name="J. Bacteriol.">
        <title>Transcriptional analysis, translational analysis, and sequence of the kilA-tellurite resistance region of plasmid RK2Ter.</title>
        <authorList>
            <person name="Walter E.G."/>
            <person name="Thomas C.M."/>
            <person name="Ibbotson J.P."/>
            <person name="Taylor D.E."/>
        </authorList>
    </citation>
    <scope>NUCLEOTIDE SEQUENCE [GENOMIC DNA]</scope>
</reference>
<reference key="3">
    <citation type="journal article" date="1993" name="J. Bacteriol.">
        <title>kil-kor regulon of promiscuous plasmid RK2: structure, products, and regulation of two operons that constitute the kilE locus.</title>
        <authorList>
            <person name="Kornacki J.A."/>
            <person name="Chang C.-H."/>
            <person name="Figurski D.H."/>
        </authorList>
    </citation>
    <scope>NUCLEOTIDE SEQUENCE [GENOMIC DNA] OF 1-11</scope>
</reference>
<organism>
    <name type="scientific">Escherichia coli</name>
    <dbReference type="NCBI Taxonomy" id="562"/>
    <lineage>
        <taxon>Bacteria</taxon>
        <taxon>Pseudomonadati</taxon>
        <taxon>Pseudomonadota</taxon>
        <taxon>Gammaproteobacteria</taxon>
        <taxon>Enterobacterales</taxon>
        <taxon>Enterobacteriaceae</taxon>
        <taxon>Escherichia</taxon>
    </lineage>
</organism>
<geneLocation type="plasmid">
    <name>IncP-alpha RK2</name>
</geneLocation>
<keyword id="KW-0614">Plasmid</keyword>
<keyword id="KW-0778">Tellurium resistance</keyword>
<gene>
    <name type="primary">klaA</name>
    <name type="synonym">kilA</name>
</gene>
<comment type="function">
    <text>Belongs to the kla operon, which is associated with cryptic tellurite resistance, and IncW plasmid fertility inhibition.</text>
</comment>
<feature type="chain" id="PRO_0000068363" description="Protein KlaA">
    <location>
        <begin position="1"/>
        <end position="257"/>
    </location>
</feature>
<sequence>MEEQSVNMARLKGEVLPALFASPATIGEYGAGIDGADSLNELSNLMEHGAVAALADKISQIVAKLADADPRKIAEKPTWFEKMLGREVERQVRYQVARKTLDQLLDEAEGVAQRVRDTLRALDDMLNTHEAEVDRLRAYIQAGREFLDENPEAGAAKAGVIEFDKPRERFARKLANLATLMASHEMSVTQMKLTRAQAVDMLDRFSETASVLVPVWRQHTLALITTKNMNPAMVAEAAKAHQALMRSLSQSLEGINQ</sequence>
<name>KLAA_ECOLX</name>